<keyword id="KW-0217">Developmental protein</keyword>
<keyword id="KW-1185">Reference proteome</keyword>
<keyword id="KW-0964">Secreted</keyword>
<keyword id="KW-0732">Signal</keyword>
<dbReference type="EMBL" id="X57474">
    <property type="protein sequence ID" value="CAA40712.1"/>
    <property type="molecule type" value="Genomic_DNA"/>
</dbReference>
<dbReference type="EMBL" id="AE014134">
    <property type="protein sequence ID" value="AAF53098.1"/>
    <property type="molecule type" value="Genomic_DNA"/>
</dbReference>
<dbReference type="EMBL" id="AY075486">
    <property type="protein sequence ID" value="AAL68296.1"/>
    <property type="molecule type" value="mRNA"/>
</dbReference>
<dbReference type="PIR" id="S00262">
    <property type="entry name" value="S00262"/>
</dbReference>
<dbReference type="RefSeq" id="NP_001245985.1">
    <property type="nucleotide sequence ID" value="NM_001259056.1"/>
</dbReference>
<dbReference type="RefSeq" id="NP_523549.1">
    <property type="nucleotide sequence ID" value="NM_078825.4"/>
</dbReference>
<dbReference type="BioGRID" id="60627">
    <property type="interactions" value="17"/>
</dbReference>
<dbReference type="IntAct" id="P21750">
    <property type="interactions" value="3"/>
</dbReference>
<dbReference type="STRING" id="7227.FBpp0300458"/>
<dbReference type="PaxDb" id="7227-FBpp0300458"/>
<dbReference type="DNASU" id="34570"/>
<dbReference type="EnsemblMetazoa" id="FBtr0080237">
    <property type="protein sequence ID" value="FBpp0079824"/>
    <property type="gene ID" value="FBgn0003313"/>
</dbReference>
<dbReference type="EnsemblMetazoa" id="FBtr0308136">
    <property type="protein sequence ID" value="FBpp0300458"/>
    <property type="gene ID" value="FBgn0003313"/>
</dbReference>
<dbReference type="GeneID" id="34570"/>
<dbReference type="KEGG" id="dme:Dmel_CG4922"/>
<dbReference type="AGR" id="FB:FBgn0003313"/>
<dbReference type="CTD" id="34570"/>
<dbReference type="FlyBase" id="FBgn0003313">
    <property type="gene designation" value="sala"/>
</dbReference>
<dbReference type="VEuPathDB" id="VectorBase:FBgn0003313"/>
<dbReference type="HOGENOM" id="CLU_1837223_0_0_1"/>
<dbReference type="InParanoid" id="P21750"/>
<dbReference type="OMA" id="HFHGGNP"/>
<dbReference type="OrthoDB" id="10549148at2759"/>
<dbReference type="PhylomeDB" id="P21750"/>
<dbReference type="BioGRID-ORCS" id="34570">
    <property type="hits" value="0 hits in 1 CRISPR screen"/>
</dbReference>
<dbReference type="ChiTaRS" id="sls">
    <property type="organism name" value="fly"/>
</dbReference>
<dbReference type="GenomeRNAi" id="34570"/>
<dbReference type="PRO" id="PR:P21750"/>
<dbReference type="Proteomes" id="UP000000803">
    <property type="component" value="Chromosome 2L"/>
</dbReference>
<dbReference type="Bgee" id="FBgn0003313">
    <property type="expression patterns" value="Expressed in anterior ectoderm anlage (Drosophila) and 49 other cell types or tissues"/>
</dbReference>
<dbReference type="GO" id="GO:0005576">
    <property type="term" value="C:extracellular region"/>
    <property type="evidence" value="ECO:0007669"/>
    <property type="project" value="UniProtKB-SubCell"/>
</dbReference>
<dbReference type="GO" id="GO:0007369">
    <property type="term" value="P:gastrulation"/>
    <property type="evidence" value="ECO:0000270"/>
    <property type="project" value="FlyBase"/>
</dbReference>
<name>SALA_DROME</name>
<feature type="signal peptide" evidence="1">
    <location>
        <begin position="1"/>
        <end position="16"/>
    </location>
</feature>
<feature type="chain" id="PRO_0000022267" description="Protein spalt-accessory">
    <location>
        <begin position="17"/>
        <end position="142"/>
    </location>
</feature>
<feature type="region of interest" description="Disordered" evidence="2">
    <location>
        <begin position="75"/>
        <end position="142"/>
    </location>
</feature>
<feature type="compositionally biased region" description="Basic and acidic residues" evidence="2">
    <location>
        <begin position="107"/>
        <end position="124"/>
    </location>
</feature>
<feature type="compositionally biased region" description="Basic residues" evidence="2">
    <location>
        <begin position="125"/>
        <end position="142"/>
    </location>
</feature>
<feature type="sequence conflict" description="In Ref. 1 and 2." evidence="5" ref="1 2">
    <original>N</original>
    <variation>I</variation>
    <location>
        <position position="15"/>
    </location>
</feature>
<feature type="sequence conflict" description="In Ref. 1 and 2." evidence="5" ref="1 2">
    <original>G</original>
    <variation>S</variation>
    <location>
        <position position="59"/>
    </location>
</feature>
<feature type="sequence conflict" description="In Ref. 1 and 2." evidence="5" ref="1 2">
    <original>T</original>
    <variation>A</variation>
    <location>
        <position position="101"/>
    </location>
</feature>
<reference key="1">
    <citation type="journal article" date="1988" name="EMBO J.">
        <title>Molecular characterization of spalt, a homeotic gene required for head and tail development in the Drosophila embryo.</title>
        <authorList>
            <person name="Frei E."/>
            <person name="Schuh R."/>
            <person name="Baumgartner S."/>
            <person name="Burri M."/>
            <person name="Noll M."/>
            <person name="Juergens G."/>
            <person name="Seifert E."/>
            <person name="Nauber U."/>
            <person name="Jaeckle H."/>
        </authorList>
    </citation>
    <scope>NUCLEOTIDE SEQUENCE [GENOMIC DNA]</scope>
</reference>
<reference key="2">
    <citation type="journal article" date="1989" name="Proc. Natl. Acad. Sci. U.S.A.">
        <title>The homeotic gene spalt (sal) evolved during Drosophila speciation.</title>
        <authorList>
            <person name="Reuter D."/>
            <person name="Schuh R."/>
            <person name="Jaeckle H."/>
        </authorList>
    </citation>
    <scope>NUCLEOTIDE SEQUENCE [GENOMIC DNA]</scope>
    <scope>FUNCTION</scope>
</reference>
<reference key="3">
    <citation type="journal article" date="2000" name="Science">
        <title>The genome sequence of Drosophila melanogaster.</title>
        <authorList>
            <person name="Adams M.D."/>
            <person name="Celniker S.E."/>
            <person name="Holt R.A."/>
            <person name="Evans C.A."/>
            <person name="Gocayne J.D."/>
            <person name="Amanatides P.G."/>
            <person name="Scherer S.E."/>
            <person name="Li P.W."/>
            <person name="Hoskins R.A."/>
            <person name="Galle R.F."/>
            <person name="George R.A."/>
            <person name="Lewis S.E."/>
            <person name="Richards S."/>
            <person name="Ashburner M."/>
            <person name="Henderson S.N."/>
            <person name="Sutton G.G."/>
            <person name="Wortman J.R."/>
            <person name="Yandell M.D."/>
            <person name="Zhang Q."/>
            <person name="Chen L.X."/>
            <person name="Brandon R.C."/>
            <person name="Rogers Y.-H.C."/>
            <person name="Blazej R.G."/>
            <person name="Champe M."/>
            <person name="Pfeiffer B.D."/>
            <person name="Wan K.H."/>
            <person name="Doyle C."/>
            <person name="Baxter E.G."/>
            <person name="Helt G."/>
            <person name="Nelson C.R."/>
            <person name="Miklos G.L.G."/>
            <person name="Abril J.F."/>
            <person name="Agbayani A."/>
            <person name="An H.-J."/>
            <person name="Andrews-Pfannkoch C."/>
            <person name="Baldwin D."/>
            <person name="Ballew R.M."/>
            <person name="Basu A."/>
            <person name="Baxendale J."/>
            <person name="Bayraktaroglu L."/>
            <person name="Beasley E.M."/>
            <person name="Beeson K.Y."/>
            <person name="Benos P.V."/>
            <person name="Berman B.P."/>
            <person name="Bhandari D."/>
            <person name="Bolshakov S."/>
            <person name="Borkova D."/>
            <person name="Botchan M.R."/>
            <person name="Bouck J."/>
            <person name="Brokstein P."/>
            <person name="Brottier P."/>
            <person name="Burtis K.C."/>
            <person name="Busam D.A."/>
            <person name="Butler H."/>
            <person name="Cadieu E."/>
            <person name="Center A."/>
            <person name="Chandra I."/>
            <person name="Cherry J.M."/>
            <person name="Cawley S."/>
            <person name="Dahlke C."/>
            <person name="Davenport L.B."/>
            <person name="Davies P."/>
            <person name="de Pablos B."/>
            <person name="Delcher A."/>
            <person name="Deng Z."/>
            <person name="Mays A.D."/>
            <person name="Dew I."/>
            <person name="Dietz S.M."/>
            <person name="Dodson K."/>
            <person name="Doup L.E."/>
            <person name="Downes M."/>
            <person name="Dugan-Rocha S."/>
            <person name="Dunkov B.C."/>
            <person name="Dunn P."/>
            <person name="Durbin K.J."/>
            <person name="Evangelista C.C."/>
            <person name="Ferraz C."/>
            <person name="Ferriera S."/>
            <person name="Fleischmann W."/>
            <person name="Fosler C."/>
            <person name="Gabrielian A.E."/>
            <person name="Garg N.S."/>
            <person name="Gelbart W.M."/>
            <person name="Glasser K."/>
            <person name="Glodek A."/>
            <person name="Gong F."/>
            <person name="Gorrell J.H."/>
            <person name="Gu Z."/>
            <person name="Guan P."/>
            <person name="Harris M."/>
            <person name="Harris N.L."/>
            <person name="Harvey D.A."/>
            <person name="Heiman T.J."/>
            <person name="Hernandez J.R."/>
            <person name="Houck J."/>
            <person name="Hostin D."/>
            <person name="Houston K.A."/>
            <person name="Howland T.J."/>
            <person name="Wei M.-H."/>
            <person name="Ibegwam C."/>
            <person name="Jalali M."/>
            <person name="Kalush F."/>
            <person name="Karpen G.H."/>
            <person name="Ke Z."/>
            <person name="Kennison J.A."/>
            <person name="Ketchum K.A."/>
            <person name="Kimmel B.E."/>
            <person name="Kodira C.D."/>
            <person name="Kraft C.L."/>
            <person name="Kravitz S."/>
            <person name="Kulp D."/>
            <person name="Lai Z."/>
            <person name="Lasko P."/>
            <person name="Lei Y."/>
            <person name="Levitsky A.A."/>
            <person name="Li J.H."/>
            <person name="Li Z."/>
            <person name="Liang Y."/>
            <person name="Lin X."/>
            <person name="Liu X."/>
            <person name="Mattei B."/>
            <person name="McIntosh T.C."/>
            <person name="McLeod M.P."/>
            <person name="McPherson D."/>
            <person name="Merkulov G."/>
            <person name="Milshina N.V."/>
            <person name="Mobarry C."/>
            <person name="Morris J."/>
            <person name="Moshrefi A."/>
            <person name="Mount S.M."/>
            <person name="Moy M."/>
            <person name="Murphy B."/>
            <person name="Murphy L."/>
            <person name="Muzny D.M."/>
            <person name="Nelson D.L."/>
            <person name="Nelson D.R."/>
            <person name="Nelson K.A."/>
            <person name="Nixon K."/>
            <person name="Nusskern D.R."/>
            <person name="Pacleb J.M."/>
            <person name="Palazzolo M."/>
            <person name="Pittman G.S."/>
            <person name="Pan S."/>
            <person name="Pollard J."/>
            <person name="Puri V."/>
            <person name="Reese M.G."/>
            <person name="Reinert K."/>
            <person name="Remington K."/>
            <person name="Saunders R.D.C."/>
            <person name="Scheeler F."/>
            <person name="Shen H."/>
            <person name="Shue B.C."/>
            <person name="Siden-Kiamos I."/>
            <person name="Simpson M."/>
            <person name="Skupski M.P."/>
            <person name="Smith T.J."/>
            <person name="Spier E."/>
            <person name="Spradling A.C."/>
            <person name="Stapleton M."/>
            <person name="Strong R."/>
            <person name="Sun E."/>
            <person name="Svirskas R."/>
            <person name="Tector C."/>
            <person name="Turner R."/>
            <person name="Venter E."/>
            <person name="Wang A.H."/>
            <person name="Wang X."/>
            <person name="Wang Z.-Y."/>
            <person name="Wassarman D.A."/>
            <person name="Weinstock G.M."/>
            <person name="Weissenbach J."/>
            <person name="Williams S.M."/>
            <person name="Woodage T."/>
            <person name="Worley K.C."/>
            <person name="Wu D."/>
            <person name="Yang S."/>
            <person name="Yao Q.A."/>
            <person name="Ye J."/>
            <person name="Yeh R.-F."/>
            <person name="Zaveri J.S."/>
            <person name="Zhan M."/>
            <person name="Zhang G."/>
            <person name="Zhao Q."/>
            <person name="Zheng L."/>
            <person name="Zheng X.H."/>
            <person name="Zhong F.N."/>
            <person name="Zhong W."/>
            <person name="Zhou X."/>
            <person name="Zhu S.C."/>
            <person name="Zhu X."/>
            <person name="Smith H.O."/>
            <person name="Gibbs R.A."/>
            <person name="Myers E.W."/>
            <person name="Rubin G.M."/>
            <person name="Venter J.C."/>
        </authorList>
    </citation>
    <scope>NUCLEOTIDE SEQUENCE [LARGE SCALE GENOMIC DNA]</scope>
    <source>
        <strain>Berkeley</strain>
    </source>
</reference>
<reference key="4">
    <citation type="journal article" date="2002" name="Genome Biol.">
        <title>Annotation of the Drosophila melanogaster euchromatic genome: a systematic review.</title>
        <authorList>
            <person name="Misra S."/>
            <person name="Crosby M.A."/>
            <person name="Mungall C.J."/>
            <person name="Matthews B.B."/>
            <person name="Campbell K.S."/>
            <person name="Hradecky P."/>
            <person name="Huang Y."/>
            <person name="Kaminker J.S."/>
            <person name="Millburn G.H."/>
            <person name="Prochnik S.E."/>
            <person name="Smith C.D."/>
            <person name="Tupy J.L."/>
            <person name="Whitfield E.J."/>
            <person name="Bayraktaroglu L."/>
            <person name="Berman B.P."/>
            <person name="Bettencourt B.R."/>
            <person name="Celniker S.E."/>
            <person name="de Grey A.D.N.J."/>
            <person name="Drysdale R.A."/>
            <person name="Harris N.L."/>
            <person name="Richter J."/>
            <person name="Russo S."/>
            <person name="Schroeder A.J."/>
            <person name="Shu S.Q."/>
            <person name="Stapleton M."/>
            <person name="Yamada C."/>
            <person name="Ashburner M."/>
            <person name="Gelbart W.M."/>
            <person name="Rubin G.M."/>
            <person name="Lewis S.E."/>
        </authorList>
    </citation>
    <scope>GENOME REANNOTATION</scope>
    <source>
        <strain>Berkeley</strain>
    </source>
</reference>
<reference key="5">
    <citation type="journal article" date="2002" name="Genome Biol.">
        <title>A Drosophila full-length cDNA resource.</title>
        <authorList>
            <person name="Stapleton M."/>
            <person name="Carlson J.W."/>
            <person name="Brokstein P."/>
            <person name="Yu C."/>
            <person name="Champe M."/>
            <person name="George R.A."/>
            <person name="Guarin H."/>
            <person name="Kronmiller B."/>
            <person name="Pacleb J.M."/>
            <person name="Park S."/>
            <person name="Wan K.H."/>
            <person name="Rubin G.M."/>
            <person name="Celniker S.E."/>
        </authorList>
    </citation>
    <scope>NUCLEOTIDE SEQUENCE [LARGE SCALE MRNA]</scope>
    <source>
        <strain>Berkeley</strain>
        <tissue>Embryo</tissue>
    </source>
</reference>
<reference key="6">
    <citation type="journal article" date="1996" name="Chromosoma">
        <title>Regulation, function and potential origin of the Drosophila gene spalt adjacent, which encodes a secreted protein expressed in the early embryo.</title>
        <authorList>
            <person name="Reuter D."/>
            <person name="Kuhnlein R.P."/>
            <person name="Frommer G."/>
            <person name="Barrio R."/>
            <person name="Kafatos F.C."/>
            <person name="Jackle H."/>
            <person name="Schuh R."/>
        </authorList>
    </citation>
    <scope>FUNCTION</scope>
    <scope>SUBCELLULAR LOCATION</scope>
    <scope>DEVELOPMENTAL STAGE</scope>
</reference>
<gene>
    <name type="primary">sala</name>
    <name type="synonym">sal</name>
    <name type="ORF">CG4922</name>
</gene>
<organism>
    <name type="scientific">Drosophila melanogaster</name>
    <name type="common">Fruit fly</name>
    <dbReference type="NCBI Taxonomy" id="7227"/>
    <lineage>
        <taxon>Eukaryota</taxon>
        <taxon>Metazoa</taxon>
        <taxon>Ecdysozoa</taxon>
        <taxon>Arthropoda</taxon>
        <taxon>Hexapoda</taxon>
        <taxon>Insecta</taxon>
        <taxon>Pterygota</taxon>
        <taxon>Neoptera</taxon>
        <taxon>Endopterygota</taxon>
        <taxon>Diptera</taxon>
        <taxon>Brachycera</taxon>
        <taxon>Muscomorpha</taxon>
        <taxon>Ephydroidea</taxon>
        <taxon>Drosophilidae</taxon>
        <taxon>Drosophila</taxon>
        <taxon>Sophophora</taxon>
    </lineage>
</organism>
<comment type="function">
    <text evidence="3 4">Likely to be involved in the establishment of the head.</text>
</comment>
<comment type="subcellular location">
    <subcellularLocation>
        <location evidence="4">Secreted</location>
    </subcellularLocation>
</comment>
<comment type="developmental stage">
    <text evidence="4">Expressed in temporally and spatially restricted patterns during embryogenesis in the anterior, ventral and terminal regions of the embryo.</text>
</comment>
<evidence type="ECO:0000255" key="1"/>
<evidence type="ECO:0000256" key="2">
    <source>
        <dbReference type="SAM" id="MobiDB-lite"/>
    </source>
</evidence>
<evidence type="ECO:0000269" key="3">
    <source>
    </source>
</evidence>
<evidence type="ECO:0000269" key="4">
    <source>
    </source>
</evidence>
<evidence type="ECO:0000305" key="5"/>
<proteinExistence type="evidence at transcript level"/>
<sequence>MKLLIALFALVTAVNAQNGFGQVGQGGYGGQGGFGGFGGIGGQAGFGGQIGFTGQGGVGGQVGIGQGGVHPGQGGFAGQGSPNQYQPGYGSPVGSGHFHGTNPVESGHFHENPHEYPEHHGDHHREHHEHHGHHEHHGHHRH</sequence>
<protein>
    <recommendedName>
        <fullName>Protein spalt-accessory</fullName>
    </recommendedName>
    <alternativeName>
        <fullName>Protein spalt-adjacent</fullName>
    </alternativeName>
</protein>
<accession>P21750</accession>
<accession>Q9VKH1</accession>